<sequence length="910" mass="100191">MAEAKRDYYEVLGLSRDADDNDIKKAFRKLAKKYHPDRNKAPDAAQIFAEINEANDVLSNPKKRANYDKYGHDGVDNEGGFAFQADVFDSFFEEIEKSGAFDNLSESNTKKKEKTKTKKKGWFWGKSKQEESTSDTTEYADVDAGLEDYPPQSDYPDDIPDVDARIEEVDQSAYADDIPDVDAGMDWEQNAEVANSASEIIPDVDAGLADEFNTSSAAPQASDWEAMIGNPEYGYFDAAGEWNWKGFFDEAGQWVWLEETEPSSVSNDETTTDSDAVTAATTVEETDQDSWTANSAPEPVDVETPVELQPETEPEPIITLSSEPVEAPASVVIEPTPEIEETTSAVEMDASVKADVSDEADATNEPTEQDTISEPEQETDAAALEEINHTTADLEPAEVSATNDLEQDVVEKVNFSEPESTVDTAATDPVVEQATETSTNGFKFFNFSSFVLSDQNPNPQTPTHHEEDAAAPEPTVDETSGESTAPEVTIAESTVELETAAEINNPATFVEEYLQPTKTTVVDKLDEPTVAKPTVSDSENSVAPEPEFVAGPEQTFSWKPAISETEEIPLTAVEPASETQTLIAEDVTSPVTPTATAIPAPSINAVPTAPVAETFEAAVDFLKEAAKIEAQLPLVPTVPEQIDGTDPSLLTQWDEYLEKTRKLFHKLFLTEQLPFIVKTDQFEIVDPNLDEHNVNLIYTEHVPQICFLNEQLKEIRYTRKLVDPQTQVTTTESITLEVQLSHKSQTEAIAIFKGFGHDYGSGCGDLKVVLKVIPSVFFQLQADGLHTAALVDPLVAYNGGLIDVFGPVNSFKVDIEGGIANNDLIEFNQLGVLRTKTKRGSLYVHLYYSSVAKKGTKTNCQVQQFFDLVHVEYKLLNYNLKQLHNYHSALTAQKKTLDRKSYQCLAVESH</sequence>
<protein>
    <recommendedName>
        <fullName>DnaJ-like protein MG200 homolog</fullName>
    </recommendedName>
</protein>
<reference key="1">
    <citation type="journal article" date="1996" name="Nucleic Acids Res.">
        <title>Complete sequence analysis of the genome of the bacterium Mycoplasma pneumoniae.</title>
        <authorList>
            <person name="Himmelreich R."/>
            <person name="Hilbert H."/>
            <person name="Plagens H."/>
            <person name="Pirkl E."/>
            <person name="Li B.-C."/>
            <person name="Herrmann R."/>
        </authorList>
    </citation>
    <scope>NUCLEOTIDE SEQUENCE [LARGE SCALE GENOMIC DNA]</scope>
    <source>
        <strain>ATCC 29342 / M129 / Subtype 1</strain>
    </source>
</reference>
<proteinExistence type="predicted"/>
<keyword id="KW-0143">Chaperone</keyword>
<keyword id="KW-1185">Reference proteome</keyword>
<name>DNAJM_MYCPN</name>
<gene>
    <name type="ordered locus">MPN_119</name>
    <name type="ORF">MP035</name>
</gene>
<organism>
    <name type="scientific">Mycoplasma pneumoniae (strain ATCC 29342 / M129 / Subtype 1)</name>
    <name type="common">Mycoplasmoides pneumoniae</name>
    <dbReference type="NCBI Taxonomy" id="272634"/>
    <lineage>
        <taxon>Bacteria</taxon>
        <taxon>Bacillati</taxon>
        <taxon>Mycoplasmatota</taxon>
        <taxon>Mycoplasmoidales</taxon>
        <taxon>Mycoplasmoidaceae</taxon>
        <taxon>Mycoplasmoides</taxon>
    </lineage>
</organism>
<feature type="chain" id="PRO_0000071003" description="DnaJ-like protein MG200 homolog">
    <location>
        <begin position="1"/>
        <end position="910"/>
    </location>
</feature>
<feature type="domain" description="J" evidence="1">
    <location>
        <begin position="4"/>
        <end position="73"/>
    </location>
</feature>
<feature type="region of interest" description="Disordered" evidence="2">
    <location>
        <begin position="102"/>
        <end position="160"/>
    </location>
</feature>
<feature type="region of interest" description="Disordered" evidence="2">
    <location>
        <begin position="260"/>
        <end position="408"/>
    </location>
</feature>
<feature type="region of interest" description="Disordered" evidence="2">
    <location>
        <begin position="451"/>
        <end position="486"/>
    </location>
</feature>
<feature type="compositionally biased region" description="Basic residues" evidence="2">
    <location>
        <begin position="111"/>
        <end position="121"/>
    </location>
</feature>
<feature type="compositionally biased region" description="Low complexity" evidence="2">
    <location>
        <begin position="273"/>
        <end position="283"/>
    </location>
</feature>
<feature type="compositionally biased region" description="Acidic residues" evidence="2">
    <location>
        <begin position="357"/>
        <end position="379"/>
    </location>
</feature>
<feature type="compositionally biased region" description="Polar residues" evidence="2">
    <location>
        <begin position="451"/>
        <end position="462"/>
    </location>
</feature>
<evidence type="ECO:0000255" key="1">
    <source>
        <dbReference type="PROSITE-ProRule" id="PRU00286"/>
    </source>
</evidence>
<evidence type="ECO:0000256" key="2">
    <source>
        <dbReference type="SAM" id="MobiDB-lite"/>
    </source>
</evidence>
<accession>P75354</accession>
<dbReference type="EMBL" id="U00089">
    <property type="protein sequence ID" value="AAB95683.1"/>
    <property type="molecule type" value="Genomic_DNA"/>
</dbReference>
<dbReference type="PIR" id="S73361">
    <property type="entry name" value="S73361"/>
</dbReference>
<dbReference type="RefSeq" id="NP_109807.1">
    <property type="nucleotide sequence ID" value="NC_000912.1"/>
</dbReference>
<dbReference type="SMR" id="P75354"/>
<dbReference type="STRING" id="272634.MPN_119"/>
<dbReference type="EnsemblBacteria" id="AAB95683">
    <property type="protein sequence ID" value="AAB95683"/>
    <property type="gene ID" value="MPN_119"/>
</dbReference>
<dbReference type="KEGG" id="mpn:MPN_119"/>
<dbReference type="PATRIC" id="fig|272634.6.peg.126"/>
<dbReference type="HOGENOM" id="CLU_319302_0_0_14"/>
<dbReference type="OrthoDB" id="9779889at2"/>
<dbReference type="BioCyc" id="MPNE272634:G1GJ3-198-MONOMER"/>
<dbReference type="Proteomes" id="UP000000808">
    <property type="component" value="Chromosome"/>
</dbReference>
<dbReference type="GO" id="GO:0005737">
    <property type="term" value="C:cytoplasm"/>
    <property type="evidence" value="ECO:0007669"/>
    <property type="project" value="TreeGrafter"/>
</dbReference>
<dbReference type="GO" id="GO:0051082">
    <property type="term" value="F:unfolded protein binding"/>
    <property type="evidence" value="ECO:0007669"/>
    <property type="project" value="TreeGrafter"/>
</dbReference>
<dbReference type="GO" id="GO:0051085">
    <property type="term" value="P:chaperone cofactor-dependent protein refolding"/>
    <property type="evidence" value="ECO:0007669"/>
    <property type="project" value="TreeGrafter"/>
</dbReference>
<dbReference type="GO" id="GO:0042026">
    <property type="term" value="P:protein refolding"/>
    <property type="evidence" value="ECO:0007669"/>
    <property type="project" value="TreeGrafter"/>
</dbReference>
<dbReference type="CDD" id="cd06257">
    <property type="entry name" value="DnaJ"/>
    <property type="match status" value="1"/>
</dbReference>
<dbReference type="FunFam" id="1.10.287.110:FF:000289">
    <property type="entry name" value="DnaJ homolog subfamily C member 7 homolog"/>
    <property type="match status" value="1"/>
</dbReference>
<dbReference type="Gene3D" id="3.30.70.3600">
    <property type="match status" value="1"/>
</dbReference>
<dbReference type="Gene3D" id="1.10.287.110">
    <property type="entry name" value="DnaJ domain"/>
    <property type="match status" value="1"/>
</dbReference>
<dbReference type="InterPro" id="IPR053693">
    <property type="entry name" value="DnaJ-like_chaperone"/>
</dbReference>
<dbReference type="InterPro" id="IPR002939">
    <property type="entry name" value="DnaJ_C"/>
</dbReference>
<dbReference type="InterPro" id="IPR001623">
    <property type="entry name" value="DnaJ_domain"/>
</dbReference>
<dbReference type="InterPro" id="IPR018253">
    <property type="entry name" value="DnaJ_domain_CS"/>
</dbReference>
<dbReference type="InterPro" id="IPR022466">
    <property type="entry name" value="EAGR_box"/>
</dbReference>
<dbReference type="InterPro" id="IPR038145">
    <property type="entry name" value="EAGR_sf"/>
</dbReference>
<dbReference type="InterPro" id="IPR036869">
    <property type="entry name" value="J_dom_sf"/>
</dbReference>
<dbReference type="InterPro" id="IPR022465">
    <property type="entry name" value="Termin_org_TopJ"/>
</dbReference>
<dbReference type="NCBIfam" id="TIGR03834">
    <property type="entry name" value="EAGR_box"/>
    <property type="match status" value="1"/>
</dbReference>
<dbReference type="NCBIfam" id="TIGR03835">
    <property type="entry name" value="termin_org_DnaJ"/>
    <property type="match status" value="1"/>
</dbReference>
<dbReference type="NCBIfam" id="NF037946">
    <property type="entry name" value="terminal_TopJ"/>
    <property type="match status" value="1"/>
</dbReference>
<dbReference type="PANTHER" id="PTHR43096:SF48">
    <property type="entry name" value="CHAPERONE PROTEIN DNAJ"/>
    <property type="match status" value="1"/>
</dbReference>
<dbReference type="PANTHER" id="PTHR43096">
    <property type="entry name" value="DNAJ HOMOLOG 1, MITOCHONDRIAL-RELATED"/>
    <property type="match status" value="1"/>
</dbReference>
<dbReference type="Pfam" id="PF00226">
    <property type="entry name" value="DnaJ"/>
    <property type="match status" value="1"/>
</dbReference>
<dbReference type="Pfam" id="PF01556">
    <property type="entry name" value="DnaJ_C"/>
    <property type="match status" value="1"/>
</dbReference>
<dbReference type="Pfam" id="PF16713">
    <property type="entry name" value="EAGR_box"/>
    <property type="match status" value="1"/>
</dbReference>
<dbReference type="PRINTS" id="PR00625">
    <property type="entry name" value="JDOMAIN"/>
</dbReference>
<dbReference type="SMART" id="SM00271">
    <property type="entry name" value="DnaJ"/>
    <property type="match status" value="1"/>
</dbReference>
<dbReference type="SUPFAM" id="SSF46565">
    <property type="entry name" value="Chaperone J-domain"/>
    <property type="match status" value="1"/>
</dbReference>
<dbReference type="PROSITE" id="PS00636">
    <property type="entry name" value="DNAJ_1"/>
    <property type="match status" value="1"/>
</dbReference>
<dbReference type="PROSITE" id="PS50076">
    <property type="entry name" value="DNAJ_2"/>
    <property type="match status" value="1"/>
</dbReference>